<name>DNJ5B_HUMAN</name>
<evidence type="ECO:0000250" key="1">
    <source>
        <dbReference type="UniProtKB" id="D3ZD82"/>
    </source>
</evidence>
<evidence type="ECO:0000255" key="2">
    <source>
        <dbReference type="PROSITE-ProRule" id="PRU00286"/>
    </source>
</evidence>
<evidence type="ECO:0000269" key="3">
    <source>
    </source>
</evidence>
<evidence type="ECO:0000303" key="4">
    <source>
    </source>
</evidence>
<evidence type="ECO:0000305" key="5"/>
<dbReference type="EMBL" id="AF368276">
    <property type="protein sequence ID" value="AAK60571.1"/>
    <property type="molecule type" value="mRNA"/>
</dbReference>
<dbReference type="EMBL" id="BC016742">
    <property type="protein sequence ID" value="AAH16742.1"/>
    <property type="molecule type" value="mRNA"/>
</dbReference>
<dbReference type="EMBL" id="AL133660">
    <property type="protein sequence ID" value="CAB63773.2"/>
    <property type="molecule type" value="mRNA"/>
</dbReference>
<dbReference type="CCDS" id="CCDS6183.1"/>
<dbReference type="PIR" id="T43470">
    <property type="entry name" value="T43470"/>
</dbReference>
<dbReference type="RefSeq" id="NP_001336361.1">
    <property type="nucleotide sequence ID" value="NM_001349432.2"/>
</dbReference>
<dbReference type="RefSeq" id="NP_149096.2">
    <property type="nucleotide sequence ID" value="NM_033105.4"/>
</dbReference>
<dbReference type="RefSeq" id="XP_011515920.1">
    <property type="nucleotide sequence ID" value="XM_011517618.2"/>
</dbReference>
<dbReference type="SMR" id="Q9UF47"/>
<dbReference type="BioGRID" id="124554">
    <property type="interactions" value="86"/>
</dbReference>
<dbReference type="FunCoup" id="Q9UF47">
    <property type="interactions" value="197"/>
</dbReference>
<dbReference type="IntAct" id="Q9UF47">
    <property type="interactions" value="13"/>
</dbReference>
<dbReference type="STRING" id="9606.ENSP00000276570"/>
<dbReference type="iPTMnet" id="Q9UF47"/>
<dbReference type="PhosphoSitePlus" id="Q9UF47"/>
<dbReference type="SwissPalm" id="Q9UF47"/>
<dbReference type="BioMuta" id="DNAJC5B"/>
<dbReference type="DMDM" id="20141445"/>
<dbReference type="jPOST" id="Q9UF47"/>
<dbReference type="MassIVE" id="Q9UF47"/>
<dbReference type="PaxDb" id="9606-ENSP00000276570"/>
<dbReference type="PeptideAtlas" id="Q9UF47"/>
<dbReference type="ProteomicsDB" id="84170"/>
<dbReference type="Antibodypedia" id="24804">
    <property type="antibodies" value="82 antibodies from 16 providers"/>
</dbReference>
<dbReference type="DNASU" id="85479"/>
<dbReference type="Ensembl" id="ENST00000276570.10">
    <property type="protein sequence ID" value="ENSP00000276570.5"/>
    <property type="gene ID" value="ENSG00000147570.10"/>
</dbReference>
<dbReference type="GeneID" id="85479"/>
<dbReference type="KEGG" id="hsa:85479"/>
<dbReference type="MANE-Select" id="ENST00000276570.10">
    <property type="protein sequence ID" value="ENSP00000276570.5"/>
    <property type="RefSeq nucleotide sequence ID" value="NM_033105.6"/>
    <property type="RefSeq protein sequence ID" value="NP_149096.2"/>
</dbReference>
<dbReference type="UCSC" id="uc003xvs.2">
    <property type="organism name" value="human"/>
</dbReference>
<dbReference type="AGR" id="HGNC:24138"/>
<dbReference type="CTD" id="85479"/>
<dbReference type="DisGeNET" id="85479"/>
<dbReference type="GeneCards" id="DNAJC5B"/>
<dbReference type="HGNC" id="HGNC:24138">
    <property type="gene designation" value="DNAJC5B"/>
</dbReference>
<dbReference type="HPA" id="ENSG00000147570">
    <property type="expression patterns" value="Tissue enriched (testis)"/>
</dbReference>
<dbReference type="MIM" id="613945">
    <property type="type" value="gene"/>
</dbReference>
<dbReference type="neXtProt" id="NX_Q9UF47"/>
<dbReference type="OpenTargets" id="ENSG00000147570"/>
<dbReference type="PharmGKB" id="PA134962894"/>
<dbReference type="VEuPathDB" id="HostDB:ENSG00000147570"/>
<dbReference type="eggNOG" id="KOG0716">
    <property type="taxonomic scope" value="Eukaryota"/>
</dbReference>
<dbReference type="GeneTree" id="ENSGT00940000159294"/>
<dbReference type="HOGENOM" id="CLU_017633_14_1_1"/>
<dbReference type="InParanoid" id="Q9UF47"/>
<dbReference type="OMA" id="EINKAHT"/>
<dbReference type="OrthoDB" id="445556at2759"/>
<dbReference type="PAN-GO" id="Q9UF47">
    <property type="GO annotations" value="0 GO annotations based on evolutionary models"/>
</dbReference>
<dbReference type="PhylomeDB" id="Q9UF47"/>
<dbReference type="TreeFam" id="TF105164"/>
<dbReference type="PathwayCommons" id="Q9UF47"/>
<dbReference type="SignaLink" id="Q9UF47"/>
<dbReference type="BioGRID-ORCS" id="85479">
    <property type="hits" value="12 hits in 1157 CRISPR screens"/>
</dbReference>
<dbReference type="GenomeRNAi" id="85479"/>
<dbReference type="Pharos" id="Q9UF47">
    <property type="development level" value="Tbio"/>
</dbReference>
<dbReference type="PRO" id="PR:Q9UF47"/>
<dbReference type="Proteomes" id="UP000005640">
    <property type="component" value="Chromosome 8"/>
</dbReference>
<dbReference type="RNAct" id="Q9UF47">
    <property type="molecule type" value="protein"/>
</dbReference>
<dbReference type="Bgee" id="ENSG00000147570">
    <property type="expression patterns" value="Expressed in sperm and 117 other cell types or tissues"/>
</dbReference>
<dbReference type="ExpressionAtlas" id="Q9UF47">
    <property type="expression patterns" value="baseline and differential"/>
</dbReference>
<dbReference type="GO" id="GO:0005737">
    <property type="term" value="C:cytoplasm"/>
    <property type="evidence" value="ECO:0007669"/>
    <property type="project" value="UniProtKB-ARBA"/>
</dbReference>
<dbReference type="GO" id="GO:0016020">
    <property type="term" value="C:membrane"/>
    <property type="evidence" value="ECO:0007669"/>
    <property type="project" value="UniProtKB-SubCell"/>
</dbReference>
<dbReference type="CDD" id="cd06257">
    <property type="entry name" value="DnaJ"/>
    <property type="match status" value="1"/>
</dbReference>
<dbReference type="FunFam" id="1.10.287.110:FF:000017">
    <property type="entry name" value="dnaJ homolog subfamily C member 5"/>
    <property type="match status" value="1"/>
</dbReference>
<dbReference type="Gene3D" id="1.10.287.110">
    <property type="entry name" value="DnaJ domain"/>
    <property type="match status" value="1"/>
</dbReference>
<dbReference type="InterPro" id="IPR051434">
    <property type="entry name" value="DnaJ_C_subfamily_member5"/>
</dbReference>
<dbReference type="InterPro" id="IPR001623">
    <property type="entry name" value="DnaJ_domain"/>
</dbReference>
<dbReference type="InterPro" id="IPR018253">
    <property type="entry name" value="DnaJ_domain_CS"/>
</dbReference>
<dbReference type="InterPro" id="IPR036869">
    <property type="entry name" value="J_dom_sf"/>
</dbReference>
<dbReference type="PANTHER" id="PTHR44027">
    <property type="entry name" value="DNAJ HOMOLOG SUBFAMILY C MEMBER 5 HOMOLOG"/>
    <property type="match status" value="1"/>
</dbReference>
<dbReference type="PANTHER" id="PTHR44027:SF6">
    <property type="entry name" value="DNAJ HOMOLOG SUBFAMILY C MEMBER 5B"/>
    <property type="match status" value="1"/>
</dbReference>
<dbReference type="Pfam" id="PF00226">
    <property type="entry name" value="DnaJ"/>
    <property type="match status" value="1"/>
</dbReference>
<dbReference type="PRINTS" id="PR00625">
    <property type="entry name" value="JDOMAIN"/>
</dbReference>
<dbReference type="SMART" id="SM00271">
    <property type="entry name" value="DnaJ"/>
    <property type="match status" value="1"/>
</dbReference>
<dbReference type="SUPFAM" id="SSF46565">
    <property type="entry name" value="Chaperone J-domain"/>
    <property type="match status" value="1"/>
</dbReference>
<dbReference type="PROSITE" id="PS00636">
    <property type="entry name" value="DNAJ_1"/>
    <property type="match status" value="1"/>
</dbReference>
<dbReference type="PROSITE" id="PS50076">
    <property type="entry name" value="DNAJ_2"/>
    <property type="match status" value="1"/>
</dbReference>
<keyword id="KW-0143">Chaperone</keyword>
<keyword id="KW-0449">Lipoprotein</keyword>
<keyword id="KW-0472">Membrane</keyword>
<keyword id="KW-0564">Palmitate</keyword>
<keyword id="KW-0597">Phosphoprotein</keyword>
<keyword id="KW-1267">Proteomics identification</keyword>
<keyword id="KW-1185">Reference proteome</keyword>
<protein>
    <recommendedName>
        <fullName>DnaJ homolog subfamily C member 5B</fullName>
    </recommendedName>
    <alternativeName>
        <fullName evidence="4">Cysteine-string protein isoform beta</fullName>
        <shortName evidence="4">CSP-beta</shortName>
    </alternativeName>
</protein>
<feature type="chain" id="PRO_0000071055" description="DnaJ homolog subfamily C member 5B">
    <location>
        <begin position="1"/>
        <end position="199"/>
    </location>
</feature>
<feature type="domain" description="J" evidence="2">
    <location>
        <begin position="19"/>
        <end position="84"/>
    </location>
</feature>
<feature type="modified residue" description="Phosphoserine" evidence="1">
    <location>
        <position position="14"/>
    </location>
</feature>
<feature type="sequence conflict" description="In Ref. 3; CAB63773." evidence="5" ref="3">
    <original>KLAL</original>
    <variation>LENP</variation>
    <location>
        <begin position="41"/>
        <end position="44"/>
    </location>
</feature>
<comment type="subunit">
    <text evidence="3">Interacts with the chaperone complex consisting of HSC70 and SGTA.</text>
</comment>
<comment type="interaction">
    <interactant intactId="EBI-10320535">
        <id>Q9UF47</id>
    </interactant>
    <interactant intactId="EBI-717422">
        <id>Q12800</id>
        <label>TFCP2</label>
    </interactant>
    <organismsDiffer>false</organismsDiffer>
    <experiments>3</experiments>
</comment>
<comment type="subcellular location">
    <subcellularLocation>
        <location evidence="3">Membrane</location>
        <topology evidence="3">Lipid-anchor</topology>
    </subcellularLocation>
    <text evidence="3">May be associated with the trans-Golgi network.</text>
</comment>
<comment type="tissue specificity">
    <text>Testis specific.</text>
</comment>
<comment type="PTM">
    <text evidence="3">Palmitoylated. Palmitoylation is not required for membrane association.</text>
</comment>
<accession>Q9UF47</accession>
<accession>Q969Y8</accession>
<sequence length="199" mass="22496">MACNIPNQRQRTLSTTGEALYEILGLHKGASNEEIKKTYRKLALKHHPDKNPDDPAATEKFKEINNAHAILTDISKRSIYDKYGSLGLYVAEQFGDENVNTYFMLSSWWAKALFVIVGLLTGCYFCCCLCCCCNCCCGHCRPESSVPEEDFYVSPEDLEEQIKSDMEKDVDFPVFLQPTNANEKTQLIKEGSRSYCTDS</sequence>
<proteinExistence type="evidence at protein level"/>
<gene>
    <name type="primary">DNAJC5B</name>
    <name type="synonym">CSPBETA</name>
</gene>
<reference key="1">
    <citation type="submission" date="2001-05" db="EMBL/GenBank/DDBJ databases">
        <title>Novel isoforms of the cysteine string protein.</title>
        <authorList>
            <person name="Tobaben S."/>
            <person name="Stahl B."/>
        </authorList>
    </citation>
    <scope>NUCLEOTIDE SEQUENCE [MRNA]</scope>
</reference>
<reference key="2">
    <citation type="journal article" date="2004" name="Genome Res.">
        <title>The status, quality, and expansion of the NIH full-length cDNA project: the Mammalian Gene Collection (MGC).</title>
        <authorList>
            <consortium name="The MGC Project Team"/>
        </authorList>
    </citation>
    <scope>NUCLEOTIDE SEQUENCE [LARGE SCALE MRNA]</scope>
    <source>
        <tissue>Testis</tissue>
    </source>
</reference>
<reference key="3">
    <citation type="journal article" date="2007" name="BMC Genomics">
        <title>The full-ORF clone resource of the German cDNA consortium.</title>
        <authorList>
            <person name="Bechtel S."/>
            <person name="Rosenfelder H."/>
            <person name="Duda A."/>
            <person name="Schmidt C.P."/>
            <person name="Ernst U."/>
            <person name="Wellenreuther R."/>
            <person name="Mehrle A."/>
            <person name="Schuster C."/>
            <person name="Bahr A."/>
            <person name="Bloecker H."/>
            <person name="Heubner D."/>
            <person name="Hoerlein A."/>
            <person name="Michel G."/>
            <person name="Wedler H."/>
            <person name="Koehrer K."/>
            <person name="Ottenwaelder B."/>
            <person name="Poustka A."/>
            <person name="Wiemann S."/>
            <person name="Schupp I."/>
        </authorList>
    </citation>
    <scope>NUCLEOTIDE SEQUENCE [LARGE SCALE MRNA] OF 1-44</scope>
    <source>
        <tissue>Testis</tissue>
    </source>
</reference>
<reference key="4">
    <citation type="journal article" date="2007" name="Biochim. Biophys. Acta">
        <title>Cysteine-string protein isoform beta (Cspbeta) is targeted to the trans-Golgi network as a non-palmitoylated CSP in clonal beta-cells.</title>
        <authorList>
            <person name="Boal F."/>
            <person name="Le Pevelen S."/>
            <person name="Cziepluch C."/>
            <person name="Scotti P."/>
            <person name="Lang J."/>
        </authorList>
    </citation>
    <scope>INTERACTION WITH HSC70 AND SGTA</scope>
    <scope>SUBCELLULAR LOCATION</scope>
    <scope>PALMITOYLATION</scope>
</reference>
<organism>
    <name type="scientific">Homo sapiens</name>
    <name type="common">Human</name>
    <dbReference type="NCBI Taxonomy" id="9606"/>
    <lineage>
        <taxon>Eukaryota</taxon>
        <taxon>Metazoa</taxon>
        <taxon>Chordata</taxon>
        <taxon>Craniata</taxon>
        <taxon>Vertebrata</taxon>
        <taxon>Euteleostomi</taxon>
        <taxon>Mammalia</taxon>
        <taxon>Eutheria</taxon>
        <taxon>Euarchontoglires</taxon>
        <taxon>Primates</taxon>
        <taxon>Haplorrhini</taxon>
        <taxon>Catarrhini</taxon>
        <taxon>Hominidae</taxon>
        <taxon>Homo</taxon>
    </lineage>
</organism>